<organism>
    <name type="scientific">Xenopus laevis</name>
    <name type="common">African clawed frog</name>
    <dbReference type="NCBI Taxonomy" id="8355"/>
    <lineage>
        <taxon>Eukaryota</taxon>
        <taxon>Metazoa</taxon>
        <taxon>Chordata</taxon>
        <taxon>Craniata</taxon>
        <taxon>Vertebrata</taxon>
        <taxon>Euteleostomi</taxon>
        <taxon>Amphibia</taxon>
        <taxon>Batrachia</taxon>
        <taxon>Anura</taxon>
        <taxon>Pipoidea</taxon>
        <taxon>Pipidae</taxon>
        <taxon>Xenopodinae</taxon>
        <taxon>Xenopus</taxon>
        <taxon>Xenopus</taxon>
    </lineage>
</organism>
<gene>
    <name type="primary">pds5b-a</name>
    <name type="synonym">aprin-a</name>
</gene>
<sequence length="1448" mass="164709">MAHSKAKGNDGKITYPPGVKEISDKISKEEMVRRLKMVVKTFMDMDQDSEEEKEQYLNLALHLASDFFLKHPDKDVRLLVACCLADIFRIYAPEAPYTSPDKLKDIFMFISRQLKGLEDTKSPQFNRYFYLLENIAWVKSYNICFELEDSNEIFTQLYRTLFSVINNGHNQKVHMHMVDLMSSIVCEGDTVSQELLDSVLVNLVPAHKNLNKQAYDLAKALLKRTAQAIEPYITNFFNQVLMLGKTSISDLSEHVFDLILELYNIDSHLLLSVLPQLEFKLKSNDNEERLQVVKLLAKMFGAKDSELASQNKTLWQCYLGRFNDIHVPVRLECVKFASHSLVNHPDLAKDLTDYLKVRSHDPEEAIRHDVIVSIVTAAKKDLLLVNDQLLNFVRERTLDKRWRVRKEAMMGLAQIYKKYSLQAEAGKESAKQISWIKDKLLHIYYQNSIDDRLLVERIFAQYMVPHNLETTERMKCLYYLYATLDTNAVKALNEMWKCQNMLRHHVKDLLDLIKKPKTEAGSKAIFSKVMVITRNLPDPGKGQDFLKKFTQVLEDDEKIRGQLEKLVSPTCSCKQAEVCVRDITKKLGNPKQPTNPFLEMIKFLLERIAPVHIDTESISALIKLVNKSIDGTADDEDEGVTTDQAIRAGLELLKVLSFTHPISFHSAETFESLLACLKMDDEKVAEAALQIFKNTGSKIEEDFPHIRSALLPVLQQKAKKGPPRQAKYSIHCIQAIFSSKETQFAQIFEPLHKSLDPGNPEQLITSLVSIGHIAQLAPDQFTAPLKSMVATFVVKDLLMTDRLPGKKTTKLWVSDDEVSTETKVKIQAIKMMVRWLLGMKNNLSKSGNSTLRLLMAILHTDGDLTEHGKLSKPDMSRLRLAAASAIVKLAQEPCYHEIITLEQYQLCALVINDECYQVRQLFAQKIHKGLSRLRLPLEYMAICALCAKDPVKERRAHARQCLVKNINVRREYLKQHAAVSEKLFSLLPEYVVPYTVHLLAHDPDYVKVQDIEQLKDIKECLWFVLEILMSKNENNSHAFIRKMVEYIKQTKDGQNPDDQKMNEKMYTVCDVAMNIIISKSTTYSLESPKDPVLPARFFTQPDKNFSNTKNYLPAELKSFFTPGKPKSTNVLGAVNKPLSSAGKQMLSKSSRMETVSNASSGSNPSSPGKIKGRLDSMELDQSENEDYTMSSPLSGKKSDKRDDSDLLKSELEKPRRGKKQSLIDQDDSLSMDELSKPAQEPKSRTGQRGRKRAAAASDSEEQTWQEKRLKEDLLENEDEQNSPPKKGRRGRPPKSAKMAISKEEPTVTTPKRGRKKAVPVESPPTDEDDHLEISEEQDFENIDQKRKGRGSSRRTPQKSDSTDSLLDTSRPTPQKRRGRPPKTPTVQQKKSHVGRPRKVVSKEPESEEEMEMSQNSPALSEHLSNEDESAEEVVVAPSTGRLRSAKKR</sequence>
<proteinExistence type="evidence at protein level"/>
<comment type="function">
    <text evidence="2 5">Plays a role in androgen-induced proliferative arrest (By similarity). Required for maintenance of sister chromatid cohesion during mitosis.</text>
</comment>
<comment type="subunit">
    <text evidence="2">Interacts with the cohesin complex.</text>
</comment>
<comment type="subcellular location">
    <subcellularLocation>
        <location evidence="1">Nucleus</location>
    </subcellularLocation>
</comment>
<comment type="PTM">
    <text evidence="5">Phosphorylated in mitotic cells.</text>
</comment>
<comment type="similarity">
    <text evidence="6">Belongs to the PDS5 family.</text>
</comment>
<protein>
    <recommendedName>
        <fullName>Sister chromatid cohesion protein PDS5 homolog B-A</fullName>
    </recommendedName>
    <alternativeName>
        <fullName>Androgen-induced proliferation inhibitor A</fullName>
    </alternativeName>
</protein>
<name>PD5BA_XENLA</name>
<accession>Q498H0</accession>
<accession>Q4QXM2</accession>
<dbReference type="EMBL" id="BC100220">
    <property type="protein sequence ID" value="AAI00221.1"/>
    <property type="molecule type" value="mRNA"/>
</dbReference>
<dbReference type="EMBL" id="AY695732">
    <property type="protein sequence ID" value="AAV84284.1"/>
    <property type="molecule type" value="mRNA"/>
</dbReference>
<dbReference type="RefSeq" id="NP_001089658.1">
    <property type="nucleotide sequence ID" value="NM_001096189.1"/>
</dbReference>
<dbReference type="SMR" id="Q498H0"/>
<dbReference type="BioGRID" id="592499">
    <property type="interactions" value="5"/>
</dbReference>
<dbReference type="IntAct" id="Q498H0">
    <property type="interactions" value="5"/>
</dbReference>
<dbReference type="DNASU" id="734718"/>
<dbReference type="GeneID" id="734718"/>
<dbReference type="KEGG" id="xla:734718"/>
<dbReference type="AGR" id="Xenbase:XB-GENE-6255297"/>
<dbReference type="CTD" id="734718"/>
<dbReference type="Xenbase" id="XB-GENE-6255297">
    <property type="gene designation" value="pds5b.L"/>
</dbReference>
<dbReference type="OrthoDB" id="200660at2759"/>
<dbReference type="Proteomes" id="UP000186698">
    <property type="component" value="Chromosome 2L"/>
</dbReference>
<dbReference type="Bgee" id="734718">
    <property type="expression patterns" value="Expressed in egg cell and 19 other cell types or tissues"/>
</dbReference>
<dbReference type="GO" id="GO:0000785">
    <property type="term" value="C:chromatin"/>
    <property type="evidence" value="ECO:0000318"/>
    <property type="project" value="GO_Central"/>
</dbReference>
<dbReference type="GO" id="GO:0005634">
    <property type="term" value="C:nucleus"/>
    <property type="evidence" value="ECO:0000250"/>
    <property type="project" value="UniProtKB"/>
</dbReference>
<dbReference type="GO" id="GO:0003677">
    <property type="term" value="F:DNA binding"/>
    <property type="evidence" value="ECO:0007669"/>
    <property type="project" value="InterPro"/>
</dbReference>
<dbReference type="GO" id="GO:0051301">
    <property type="term" value="P:cell division"/>
    <property type="evidence" value="ECO:0007669"/>
    <property type="project" value="UniProtKB-KW"/>
</dbReference>
<dbReference type="GO" id="GO:0006281">
    <property type="term" value="P:DNA repair"/>
    <property type="evidence" value="ECO:0000318"/>
    <property type="project" value="GO_Central"/>
</dbReference>
<dbReference type="GO" id="GO:0007064">
    <property type="term" value="P:mitotic sister chromatid cohesion"/>
    <property type="evidence" value="ECO:0000314"/>
    <property type="project" value="UniProtKB"/>
</dbReference>
<dbReference type="GO" id="GO:0008285">
    <property type="term" value="P:negative regulation of cell population proliferation"/>
    <property type="evidence" value="ECO:0000250"/>
    <property type="project" value="UniProtKB"/>
</dbReference>
<dbReference type="CDD" id="cd19953">
    <property type="entry name" value="PDS5"/>
    <property type="match status" value="1"/>
</dbReference>
<dbReference type="FunFam" id="1.25.10.10:FF:001146">
    <property type="entry name" value="PDS5 cohesin associated factor B"/>
    <property type="match status" value="1"/>
</dbReference>
<dbReference type="FunFam" id="1.25.10.10:FF:000064">
    <property type="entry name" value="Sister chromatid cohesion protein PDS5 homolog A"/>
    <property type="match status" value="1"/>
</dbReference>
<dbReference type="Gene3D" id="1.25.10.10">
    <property type="entry name" value="Leucine-rich Repeat Variant"/>
    <property type="match status" value="2"/>
</dbReference>
<dbReference type="InterPro" id="IPR011989">
    <property type="entry name" value="ARM-like"/>
</dbReference>
<dbReference type="InterPro" id="IPR016024">
    <property type="entry name" value="ARM-type_fold"/>
</dbReference>
<dbReference type="InterPro" id="IPR017956">
    <property type="entry name" value="AT_hook_DNA-bd_motif"/>
</dbReference>
<dbReference type="InterPro" id="IPR039776">
    <property type="entry name" value="Pds5"/>
</dbReference>
<dbReference type="PANTHER" id="PTHR12663">
    <property type="entry name" value="ANDROGEN INDUCED INHIBITOR OF PROLIFERATION AS3 / PDS5-RELATED"/>
    <property type="match status" value="1"/>
</dbReference>
<dbReference type="PANTHER" id="PTHR12663:SF1">
    <property type="entry name" value="SISTER CHROMATID COHESION PROTEIN PDS5 HOMOLOG B"/>
    <property type="match status" value="1"/>
</dbReference>
<dbReference type="Pfam" id="PF20168">
    <property type="entry name" value="PDS5"/>
    <property type="match status" value="1"/>
</dbReference>
<dbReference type="SMART" id="SM00384">
    <property type="entry name" value="AT_hook"/>
    <property type="match status" value="3"/>
</dbReference>
<dbReference type="SUPFAM" id="SSF48371">
    <property type="entry name" value="ARM repeat"/>
    <property type="match status" value="1"/>
</dbReference>
<reference evidence="7" key="1">
    <citation type="submission" date="2005-08" db="EMBL/GenBank/DDBJ databases">
        <authorList>
            <consortium name="NIH - Xenopus Gene Collection (XGC) project"/>
        </authorList>
    </citation>
    <scope>NUCLEOTIDE SEQUENCE [LARGE SCALE MRNA]</scope>
    <source>
        <tissue evidence="7">Oocyte</tissue>
    </source>
</reference>
<reference evidence="6 8" key="2">
    <citation type="journal article" date="2005" name="J. Cell Sci.">
        <title>Functional contribution of Pds5 to cohesin-mediated cohesion in human cells and Xenopus egg extracts.</title>
        <authorList>
            <person name="Losada A."/>
            <person name="Yokochi T."/>
            <person name="Hirano T."/>
        </authorList>
    </citation>
    <scope>NUCLEOTIDE SEQUENCE [MRNA] OF 484-1448</scope>
    <scope>FUNCTION</scope>
    <scope>PHOSPHORYLATION</scope>
</reference>
<keyword id="KW-0131">Cell cycle</keyword>
<keyword id="KW-0132">Cell division</keyword>
<keyword id="KW-0498">Mitosis</keyword>
<keyword id="KW-0539">Nucleus</keyword>
<keyword id="KW-0597">Phosphoprotein</keyword>
<keyword id="KW-1185">Reference proteome</keyword>
<keyword id="KW-0677">Repeat</keyword>
<evidence type="ECO:0000250" key="1">
    <source>
        <dbReference type="UniProtKB" id="Q6TRW4"/>
    </source>
</evidence>
<evidence type="ECO:0000250" key="2">
    <source>
        <dbReference type="UniProtKB" id="Q9NTI5"/>
    </source>
</evidence>
<evidence type="ECO:0000255" key="3"/>
<evidence type="ECO:0000256" key="4">
    <source>
        <dbReference type="SAM" id="MobiDB-lite"/>
    </source>
</evidence>
<evidence type="ECO:0000269" key="5">
    <source>
    </source>
</evidence>
<evidence type="ECO:0000305" key="6"/>
<evidence type="ECO:0000312" key="7">
    <source>
        <dbReference type="EMBL" id="AAI00221.1"/>
    </source>
</evidence>
<evidence type="ECO:0000312" key="8">
    <source>
        <dbReference type="EMBL" id="AAV84284.1"/>
    </source>
</evidence>
<feature type="chain" id="PRO_0000287427" description="Sister chromatid cohesion protein PDS5 homolog B-A">
    <location>
        <begin position="1"/>
        <end position="1448"/>
    </location>
</feature>
<feature type="repeat" description="HEAT" evidence="3">
    <location>
        <begin position="383"/>
        <end position="419"/>
    </location>
</feature>
<feature type="DNA-binding region" description="A.T hook 1" evidence="3">
    <location>
        <begin position="1286"/>
        <end position="1298"/>
    </location>
</feature>
<feature type="DNA-binding region" description="A.T hook 2" evidence="3">
    <location>
        <begin position="1374"/>
        <end position="1386"/>
    </location>
</feature>
<feature type="DNA-binding region" description="A.T hook 3" evidence="3">
    <location>
        <begin position="1390"/>
        <end position="1402"/>
    </location>
</feature>
<feature type="region of interest" description="Disordered" evidence="4">
    <location>
        <begin position="1141"/>
        <end position="1448"/>
    </location>
</feature>
<feature type="compositionally biased region" description="Polar residues" evidence="4">
    <location>
        <begin position="1141"/>
        <end position="1155"/>
    </location>
</feature>
<feature type="compositionally biased region" description="Low complexity" evidence="4">
    <location>
        <begin position="1156"/>
        <end position="1168"/>
    </location>
</feature>
<feature type="compositionally biased region" description="Acidic residues" evidence="4">
    <location>
        <begin position="1177"/>
        <end position="1186"/>
    </location>
</feature>
<feature type="compositionally biased region" description="Basic and acidic residues" evidence="4">
    <location>
        <begin position="1196"/>
        <end position="1214"/>
    </location>
</feature>
<feature type="compositionally biased region" description="Basic and acidic residues" evidence="4">
    <location>
        <begin position="1233"/>
        <end position="1243"/>
    </location>
</feature>
<feature type="compositionally biased region" description="Basic and acidic residues" evidence="4">
    <location>
        <begin position="1264"/>
        <end position="1273"/>
    </location>
</feature>
<feature type="compositionally biased region" description="Basic residues" evidence="4">
    <location>
        <begin position="1285"/>
        <end position="1294"/>
    </location>
</feature>
<feature type="compositionally biased region" description="Acidic residues" evidence="4">
    <location>
        <begin position="1324"/>
        <end position="1341"/>
    </location>
</feature>
<feature type="compositionally biased region" description="Basic residues" evidence="4">
    <location>
        <begin position="1346"/>
        <end position="1356"/>
    </location>
</feature>
<feature type="compositionally biased region" description="Basic residues" evidence="4">
    <location>
        <begin position="1389"/>
        <end position="1399"/>
    </location>
</feature>
<feature type="sequence conflict" description="In Ref. 2; AAV84284." evidence="6" ref="2">
    <original>P</original>
    <variation>H</variation>
    <location>
        <position position="704"/>
    </location>
</feature>
<feature type="sequence conflict" description="In Ref. 2; AAV84284." evidence="6" ref="2">
    <original>L</original>
    <variation>W</variation>
    <location>
        <position position="714"/>
    </location>
</feature>
<feature type="sequence conflict" description="In Ref. 2; AAV84284." evidence="6" ref="2">
    <original>A</original>
    <variation>V</variation>
    <location>
        <position position="718"/>
    </location>
</feature>
<feature type="sequence conflict" description="In Ref. 2; AAV84284." evidence="6" ref="2">
    <original>P</original>
    <variation>L</variation>
    <location>
        <position position="722"/>
    </location>
</feature>
<feature type="sequence conflict" description="In Ref. 2; AAV84284." evidence="6" ref="2">
    <original>L</original>
    <variation>V</variation>
    <location>
        <position position="889"/>
    </location>
</feature>
<feature type="sequence conflict" description="In Ref. 2; AAV84284." evidence="6" ref="2">
    <original>K</original>
    <variation>R</variation>
    <location>
        <position position="1169"/>
    </location>
</feature>
<feature type="sequence conflict" description="In Ref. 2; AAV84284." evidence="6" ref="2">
    <original>SM</original>
    <variation>TT</variation>
    <location>
        <begin position="1176"/>
        <end position="1177"/>
    </location>
</feature>
<feature type="sequence conflict" description="In Ref. 2; AAV84284." evidence="6" ref="2">
    <original>L</original>
    <variation>V</variation>
    <location>
        <position position="1211"/>
    </location>
</feature>